<gene>
    <name evidence="1" type="primary">atpH</name>
    <name type="ordered locus">EAT1b_1312</name>
</gene>
<protein>
    <recommendedName>
        <fullName evidence="1">ATP synthase subunit delta</fullName>
    </recommendedName>
    <alternativeName>
        <fullName evidence="1">ATP synthase F(1) sector subunit delta</fullName>
    </alternativeName>
    <alternativeName>
        <fullName evidence="1">F-type ATPase subunit delta</fullName>
        <shortName evidence="1">F-ATPase subunit delta</shortName>
    </alternativeName>
</protein>
<accession>C4KYS6</accession>
<proteinExistence type="inferred from homology"/>
<sequence length="177" mass="19667">MNASLAKRYAKALFDLAREQGTLDQVEAEVRLLDEVLHATPELMDLLTNPAVSDSELAQLLKDSFGDMTAIVVNTLLVMVENDRAAEVRALPRYVRELINDYRGIAEGIVTSAYPLSATDLKDVELVFGQKLGKTLQLKNVVDEEVIGGLRVQVGYTTYDDTIETKLTRLERELLNA</sequence>
<feature type="chain" id="PRO_1000215236" description="ATP synthase subunit delta">
    <location>
        <begin position="1"/>
        <end position="177"/>
    </location>
</feature>
<keyword id="KW-0066">ATP synthesis</keyword>
<keyword id="KW-1003">Cell membrane</keyword>
<keyword id="KW-0139">CF(1)</keyword>
<keyword id="KW-0375">Hydrogen ion transport</keyword>
<keyword id="KW-0406">Ion transport</keyword>
<keyword id="KW-0472">Membrane</keyword>
<keyword id="KW-0813">Transport</keyword>
<organism>
    <name type="scientific">Exiguobacterium sp. (strain ATCC BAA-1283 / AT1b)</name>
    <dbReference type="NCBI Taxonomy" id="360911"/>
    <lineage>
        <taxon>Bacteria</taxon>
        <taxon>Bacillati</taxon>
        <taxon>Bacillota</taxon>
        <taxon>Bacilli</taxon>
        <taxon>Bacillales</taxon>
        <taxon>Bacillales Family XII. Incertae Sedis</taxon>
        <taxon>Exiguobacterium</taxon>
    </lineage>
</organism>
<comment type="function">
    <text evidence="1">F(1)F(0) ATP synthase produces ATP from ADP in the presence of a proton or sodium gradient. F-type ATPases consist of two structural domains, F(1) containing the extramembraneous catalytic core and F(0) containing the membrane proton channel, linked together by a central stalk and a peripheral stalk. During catalysis, ATP synthesis in the catalytic domain of F(1) is coupled via a rotary mechanism of the central stalk subunits to proton translocation.</text>
</comment>
<comment type="function">
    <text evidence="1">This protein is part of the stalk that links CF(0) to CF(1). It either transmits conformational changes from CF(0) to CF(1) or is implicated in proton conduction.</text>
</comment>
<comment type="subunit">
    <text evidence="1">F-type ATPases have 2 components, F(1) - the catalytic core - and F(0) - the membrane proton channel. F(1) has five subunits: alpha(3), beta(3), gamma(1), delta(1), epsilon(1). F(0) has three main subunits: a(1), b(2) and c(10-14). The alpha and beta chains form an alternating ring which encloses part of the gamma chain. F(1) is attached to F(0) by a central stalk formed by the gamma and epsilon chains, while a peripheral stalk is formed by the delta and b chains.</text>
</comment>
<comment type="subcellular location">
    <subcellularLocation>
        <location evidence="1">Cell membrane</location>
        <topology evidence="1">Peripheral membrane protein</topology>
    </subcellularLocation>
</comment>
<comment type="similarity">
    <text evidence="1">Belongs to the ATPase delta chain family.</text>
</comment>
<dbReference type="EMBL" id="CP001615">
    <property type="protein sequence ID" value="ACQ70239.1"/>
    <property type="molecule type" value="Genomic_DNA"/>
</dbReference>
<dbReference type="RefSeq" id="WP_012727358.1">
    <property type="nucleotide sequence ID" value="NC_012673.1"/>
</dbReference>
<dbReference type="SMR" id="C4KYS6"/>
<dbReference type="STRING" id="360911.EAT1b_1312"/>
<dbReference type="KEGG" id="eat:EAT1b_1312"/>
<dbReference type="eggNOG" id="COG0712">
    <property type="taxonomic scope" value="Bacteria"/>
</dbReference>
<dbReference type="HOGENOM" id="CLU_085114_1_1_9"/>
<dbReference type="OrthoDB" id="9802471at2"/>
<dbReference type="Proteomes" id="UP000000716">
    <property type="component" value="Chromosome"/>
</dbReference>
<dbReference type="GO" id="GO:0005886">
    <property type="term" value="C:plasma membrane"/>
    <property type="evidence" value="ECO:0007669"/>
    <property type="project" value="UniProtKB-SubCell"/>
</dbReference>
<dbReference type="GO" id="GO:0045259">
    <property type="term" value="C:proton-transporting ATP synthase complex"/>
    <property type="evidence" value="ECO:0007669"/>
    <property type="project" value="UniProtKB-KW"/>
</dbReference>
<dbReference type="GO" id="GO:0046933">
    <property type="term" value="F:proton-transporting ATP synthase activity, rotational mechanism"/>
    <property type="evidence" value="ECO:0007669"/>
    <property type="project" value="UniProtKB-UniRule"/>
</dbReference>
<dbReference type="Gene3D" id="1.10.520.20">
    <property type="entry name" value="N-terminal domain of the delta subunit of the F1F0-ATP synthase"/>
    <property type="match status" value="1"/>
</dbReference>
<dbReference type="HAMAP" id="MF_01416">
    <property type="entry name" value="ATP_synth_delta_bact"/>
    <property type="match status" value="1"/>
</dbReference>
<dbReference type="InterPro" id="IPR026015">
    <property type="entry name" value="ATP_synth_OSCP/delta_N_sf"/>
</dbReference>
<dbReference type="InterPro" id="IPR020781">
    <property type="entry name" value="ATPase_OSCP/d_CS"/>
</dbReference>
<dbReference type="InterPro" id="IPR000711">
    <property type="entry name" value="ATPase_OSCP/dsu"/>
</dbReference>
<dbReference type="NCBIfam" id="TIGR01145">
    <property type="entry name" value="ATP_synt_delta"/>
    <property type="match status" value="1"/>
</dbReference>
<dbReference type="NCBIfam" id="NF004403">
    <property type="entry name" value="PRK05758.2-4"/>
    <property type="match status" value="1"/>
</dbReference>
<dbReference type="PANTHER" id="PTHR11910">
    <property type="entry name" value="ATP SYNTHASE DELTA CHAIN"/>
    <property type="match status" value="1"/>
</dbReference>
<dbReference type="Pfam" id="PF00213">
    <property type="entry name" value="OSCP"/>
    <property type="match status" value="1"/>
</dbReference>
<dbReference type="PRINTS" id="PR00125">
    <property type="entry name" value="ATPASEDELTA"/>
</dbReference>
<dbReference type="SUPFAM" id="SSF47928">
    <property type="entry name" value="N-terminal domain of the delta subunit of the F1F0-ATP synthase"/>
    <property type="match status" value="1"/>
</dbReference>
<dbReference type="PROSITE" id="PS00389">
    <property type="entry name" value="ATPASE_DELTA"/>
    <property type="match status" value="1"/>
</dbReference>
<evidence type="ECO:0000255" key="1">
    <source>
        <dbReference type="HAMAP-Rule" id="MF_01416"/>
    </source>
</evidence>
<name>ATPD_EXISA</name>
<reference key="1">
    <citation type="journal article" date="2011" name="J. Bacteriol.">
        <title>Complete genome sequence of the Thermophilic Bacterium Exiguobacterium sp. AT1b.</title>
        <authorList>
            <person name="Vishnivetskaya T.A."/>
            <person name="Lucas S."/>
            <person name="Copeland A."/>
            <person name="Lapidus A."/>
            <person name="Glavina del Rio T."/>
            <person name="Dalin E."/>
            <person name="Tice H."/>
            <person name="Bruce D.C."/>
            <person name="Goodwin L.A."/>
            <person name="Pitluck S."/>
            <person name="Saunders E."/>
            <person name="Brettin T."/>
            <person name="Detter C."/>
            <person name="Han C."/>
            <person name="Larimer F."/>
            <person name="Land M.L."/>
            <person name="Hauser L.J."/>
            <person name="Kyrpides N.C."/>
            <person name="Ovchinnikova G."/>
            <person name="Kathariou S."/>
            <person name="Ramaley R.F."/>
            <person name="Rodrigues D.F."/>
            <person name="Hendrix C."/>
            <person name="Richardson P."/>
            <person name="Tiedje J.M."/>
        </authorList>
    </citation>
    <scope>NUCLEOTIDE SEQUENCE [LARGE SCALE GENOMIC DNA]</scope>
    <source>
        <strain>ATCC BAA-1283 / AT1b</strain>
    </source>
</reference>